<protein>
    <recommendedName>
        <fullName evidence="1">Aspartate--tRNA(Asp/Asn) ligase</fullName>
        <ecNumber evidence="1">6.1.1.23</ecNumber>
    </recommendedName>
    <alternativeName>
        <fullName evidence="1">Aspartyl-tRNA synthetase</fullName>
        <shortName evidence="1">AspRS</shortName>
    </alternativeName>
    <alternativeName>
        <fullName evidence="1">Non-discriminating aspartyl-tRNA synthetase</fullName>
        <shortName evidence="1">ND-AspRS</shortName>
    </alternativeName>
</protein>
<accession>B4RPA1</accession>
<comment type="function">
    <text evidence="1">Aspartyl-tRNA synthetase with relaxed tRNA specificity since it is able to aspartylate not only its cognate tRNA(Asp) but also tRNA(Asn). Reaction proceeds in two steps: L-aspartate is first activated by ATP to form Asp-AMP and then transferred to the acceptor end of tRNA(Asp/Asn).</text>
</comment>
<comment type="catalytic activity">
    <reaction evidence="1">
        <text>tRNA(Asx) + L-aspartate + ATP = L-aspartyl-tRNA(Asx) + AMP + diphosphate</text>
        <dbReference type="Rhea" id="RHEA:18349"/>
        <dbReference type="Rhea" id="RHEA-COMP:9710"/>
        <dbReference type="Rhea" id="RHEA-COMP:9711"/>
        <dbReference type="ChEBI" id="CHEBI:29991"/>
        <dbReference type="ChEBI" id="CHEBI:30616"/>
        <dbReference type="ChEBI" id="CHEBI:33019"/>
        <dbReference type="ChEBI" id="CHEBI:78442"/>
        <dbReference type="ChEBI" id="CHEBI:78516"/>
        <dbReference type="ChEBI" id="CHEBI:456215"/>
        <dbReference type="EC" id="6.1.1.23"/>
    </reaction>
</comment>
<comment type="subunit">
    <text evidence="1">Homodimer.</text>
</comment>
<comment type="subcellular location">
    <subcellularLocation>
        <location evidence="1">Cytoplasm</location>
    </subcellularLocation>
</comment>
<comment type="similarity">
    <text evidence="1">Belongs to the class-II aminoacyl-tRNA synthetase family. Type 1 subfamily.</text>
</comment>
<reference key="1">
    <citation type="journal article" date="2008" name="J. Bacteriol.">
        <title>Complete genome sequence of Neisseria gonorrhoeae NCCP11945.</title>
        <authorList>
            <person name="Chung G.T."/>
            <person name="Yoo J.S."/>
            <person name="Oh H.B."/>
            <person name="Lee Y.S."/>
            <person name="Cha S.H."/>
            <person name="Kim S.J."/>
            <person name="Yoo C.K."/>
        </authorList>
    </citation>
    <scope>NUCLEOTIDE SEQUENCE [LARGE SCALE GENOMIC DNA]</scope>
    <source>
        <strain>NCCP11945</strain>
    </source>
</reference>
<proteinExistence type="inferred from homology"/>
<organism>
    <name type="scientific">Neisseria gonorrhoeae (strain NCCP11945)</name>
    <dbReference type="NCBI Taxonomy" id="521006"/>
    <lineage>
        <taxon>Bacteria</taxon>
        <taxon>Pseudomonadati</taxon>
        <taxon>Pseudomonadota</taxon>
        <taxon>Betaproteobacteria</taxon>
        <taxon>Neisseriales</taxon>
        <taxon>Neisseriaceae</taxon>
        <taxon>Neisseria</taxon>
    </lineage>
</organism>
<sequence>MRTNYCGLISEQYLGQTVTVKGWVHRRRDHGGVIFIDLRDREGIVQVVIDPDTPEAFAAADSARNEYVLGITGRVRNRPEGTTNDKMISGKIEILAKEIEVLNAAATPPFQIDDENISENVRLTNRVIDLRRPVMQRNLRLRYQVAMGVRRYLDAQGFIDIETPMLTRSTPEGARDYLVPSRVHPGEFFALPQSPQLFKQLLMVAGFDRYYQITKCFRDEDLRADRQPEFTQIDLETSFLNEDEIMDITEGMAKQVFKDALNVDLGDFPRMPYSEAMFYYGSDKPDMRINLKFTELTDLMKTEEFKVFRGAADMKGGRVVALRVPNGAKFSRKEIDEYTKFVGIYGAKGLAYIKVNDAGNLSNGEDSGLQSPIVKFLSENALKEIIERTAAQNGDIIFFGADKAKVVNEAVGALRIKVGLEHGKDNGYFTDEWKPLWVVDFPMFEYDEEADRYVAVHHPFTAPKEGHEDLMVSDPANCLARAYDMVLNGWEIGGGSIRIHRADVQGKVFAALKISPEEQQEKFGFLLDNLKFGAPPHGGLAFGLDRLVTLMTGAESIRDVIAFPKTQRAQCLLTDAPNSVDDKQLRELSLRLRQKAVETKEA</sequence>
<dbReference type="EC" id="6.1.1.23" evidence="1"/>
<dbReference type="EMBL" id="CP001050">
    <property type="protein sequence ID" value="ACF30406.1"/>
    <property type="molecule type" value="Genomic_DNA"/>
</dbReference>
<dbReference type="RefSeq" id="WP_012503853.1">
    <property type="nucleotide sequence ID" value="NC_011035.1"/>
</dbReference>
<dbReference type="SMR" id="B4RPA1"/>
<dbReference type="KEGG" id="ngk:NGK_1761"/>
<dbReference type="HOGENOM" id="CLU_014330_3_2_4"/>
<dbReference type="Proteomes" id="UP000002564">
    <property type="component" value="Chromosome"/>
</dbReference>
<dbReference type="GO" id="GO:0005737">
    <property type="term" value="C:cytoplasm"/>
    <property type="evidence" value="ECO:0007669"/>
    <property type="project" value="UniProtKB-SubCell"/>
</dbReference>
<dbReference type="GO" id="GO:0004815">
    <property type="term" value="F:aspartate-tRNA ligase activity"/>
    <property type="evidence" value="ECO:0007669"/>
    <property type="project" value="UniProtKB-UniRule"/>
</dbReference>
<dbReference type="GO" id="GO:0050560">
    <property type="term" value="F:aspartate-tRNA(Asn) ligase activity"/>
    <property type="evidence" value="ECO:0007669"/>
    <property type="project" value="UniProtKB-EC"/>
</dbReference>
<dbReference type="GO" id="GO:0005524">
    <property type="term" value="F:ATP binding"/>
    <property type="evidence" value="ECO:0007669"/>
    <property type="project" value="UniProtKB-UniRule"/>
</dbReference>
<dbReference type="GO" id="GO:0003676">
    <property type="term" value="F:nucleic acid binding"/>
    <property type="evidence" value="ECO:0007669"/>
    <property type="project" value="InterPro"/>
</dbReference>
<dbReference type="GO" id="GO:0006422">
    <property type="term" value="P:aspartyl-tRNA aminoacylation"/>
    <property type="evidence" value="ECO:0007669"/>
    <property type="project" value="UniProtKB-UniRule"/>
</dbReference>
<dbReference type="CDD" id="cd00777">
    <property type="entry name" value="AspRS_core"/>
    <property type="match status" value="1"/>
</dbReference>
<dbReference type="CDD" id="cd04317">
    <property type="entry name" value="EcAspRS_like_N"/>
    <property type="match status" value="1"/>
</dbReference>
<dbReference type="Gene3D" id="3.30.930.10">
    <property type="entry name" value="Bira Bifunctional Protein, Domain 2"/>
    <property type="match status" value="1"/>
</dbReference>
<dbReference type="Gene3D" id="3.30.1360.30">
    <property type="entry name" value="GAD-like domain"/>
    <property type="match status" value="1"/>
</dbReference>
<dbReference type="Gene3D" id="2.40.50.140">
    <property type="entry name" value="Nucleic acid-binding proteins"/>
    <property type="match status" value="1"/>
</dbReference>
<dbReference type="HAMAP" id="MF_00044">
    <property type="entry name" value="Asp_tRNA_synth_type1"/>
    <property type="match status" value="1"/>
</dbReference>
<dbReference type="InterPro" id="IPR004364">
    <property type="entry name" value="Aa-tRNA-synt_II"/>
</dbReference>
<dbReference type="InterPro" id="IPR006195">
    <property type="entry name" value="aa-tRNA-synth_II"/>
</dbReference>
<dbReference type="InterPro" id="IPR045864">
    <property type="entry name" value="aa-tRNA-synth_II/BPL/LPL"/>
</dbReference>
<dbReference type="InterPro" id="IPR004524">
    <property type="entry name" value="Asp-tRNA-ligase_1"/>
</dbReference>
<dbReference type="InterPro" id="IPR047089">
    <property type="entry name" value="Asp-tRNA-ligase_1_N"/>
</dbReference>
<dbReference type="InterPro" id="IPR002312">
    <property type="entry name" value="Asp/Asn-tRNA-synth_IIb"/>
</dbReference>
<dbReference type="InterPro" id="IPR047090">
    <property type="entry name" value="AspRS_core"/>
</dbReference>
<dbReference type="InterPro" id="IPR004115">
    <property type="entry name" value="GAD-like_sf"/>
</dbReference>
<dbReference type="InterPro" id="IPR029351">
    <property type="entry name" value="GAD_dom"/>
</dbReference>
<dbReference type="InterPro" id="IPR012340">
    <property type="entry name" value="NA-bd_OB-fold"/>
</dbReference>
<dbReference type="InterPro" id="IPR004365">
    <property type="entry name" value="NA-bd_OB_tRNA"/>
</dbReference>
<dbReference type="NCBIfam" id="TIGR00459">
    <property type="entry name" value="aspS_bact"/>
    <property type="match status" value="1"/>
</dbReference>
<dbReference type="NCBIfam" id="NF001750">
    <property type="entry name" value="PRK00476.1"/>
    <property type="match status" value="1"/>
</dbReference>
<dbReference type="PANTHER" id="PTHR22594:SF5">
    <property type="entry name" value="ASPARTATE--TRNA LIGASE, MITOCHONDRIAL"/>
    <property type="match status" value="1"/>
</dbReference>
<dbReference type="PANTHER" id="PTHR22594">
    <property type="entry name" value="ASPARTYL/LYSYL-TRNA SYNTHETASE"/>
    <property type="match status" value="1"/>
</dbReference>
<dbReference type="Pfam" id="PF02938">
    <property type="entry name" value="GAD"/>
    <property type="match status" value="1"/>
</dbReference>
<dbReference type="Pfam" id="PF00152">
    <property type="entry name" value="tRNA-synt_2"/>
    <property type="match status" value="1"/>
</dbReference>
<dbReference type="Pfam" id="PF01336">
    <property type="entry name" value="tRNA_anti-codon"/>
    <property type="match status" value="1"/>
</dbReference>
<dbReference type="PRINTS" id="PR01042">
    <property type="entry name" value="TRNASYNTHASP"/>
</dbReference>
<dbReference type="SUPFAM" id="SSF55681">
    <property type="entry name" value="Class II aaRS and biotin synthetases"/>
    <property type="match status" value="1"/>
</dbReference>
<dbReference type="SUPFAM" id="SSF55261">
    <property type="entry name" value="GAD domain-like"/>
    <property type="match status" value="1"/>
</dbReference>
<dbReference type="SUPFAM" id="SSF50249">
    <property type="entry name" value="Nucleic acid-binding proteins"/>
    <property type="match status" value="1"/>
</dbReference>
<dbReference type="PROSITE" id="PS50862">
    <property type="entry name" value="AA_TRNA_LIGASE_II"/>
    <property type="match status" value="1"/>
</dbReference>
<keyword id="KW-0030">Aminoacyl-tRNA synthetase</keyword>
<keyword id="KW-0067">ATP-binding</keyword>
<keyword id="KW-0963">Cytoplasm</keyword>
<keyword id="KW-0436">Ligase</keyword>
<keyword id="KW-0547">Nucleotide-binding</keyword>
<keyword id="KW-0648">Protein biosynthesis</keyword>
<evidence type="ECO:0000255" key="1">
    <source>
        <dbReference type="HAMAP-Rule" id="MF_00044"/>
    </source>
</evidence>
<gene>
    <name evidence="1" type="primary">aspS</name>
    <name type="ordered locus">NGK_1761</name>
</gene>
<feature type="chain" id="PRO_1000091018" description="Aspartate--tRNA(Asp/Asn) ligase">
    <location>
        <begin position="1"/>
        <end position="602"/>
    </location>
</feature>
<feature type="region of interest" description="Aspartate" evidence="1">
    <location>
        <begin position="196"/>
        <end position="199"/>
    </location>
</feature>
<feature type="binding site" evidence="1">
    <location>
        <position position="172"/>
    </location>
    <ligand>
        <name>L-aspartate</name>
        <dbReference type="ChEBI" id="CHEBI:29991"/>
    </ligand>
</feature>
<feature type="binding site" evidence="1">
    <location>
        <begin position="218"/>
        <end position="220"/>
    </location>
    <ligand>
        <name>ATP</name>
        <dbReference type="ChEBI" id="CHEBI:30616"/>
    </ligand>
</feature>
<feature type="binding site" evidence="1">
    <location>
        <position position="218"/>
    </location>
    <ligand>
        <name>L-aspartate</name>
        <dbReference type="ChEBI" id="CHEBI:29991"/>
    </ligand>
</feature>
<feature type="binding site" evidence="1">
    <location>
        <position position="227"/>
    </location>
    <ligand>
        <name>ATP</name>
        <dbReference type="ChEBI" id="CHEBI:30616"/>
    </ligand>
</feature>
<feature type="binding site" evidence="1">
    <location>
        <position position="457"/>
    </location>
    <ligand>
        <name>L-aspartate</name>
        <dbReference type="ChEBI" id="CHEBI:29991"/>
    </ligand>
</feature>
<feature type="binding site" evidence="1">
    <location>
        <position position="491"/>
    </location>
    <ligand>
        <name>ATP</name>
        <dbReference type="ChEBI" id="CHEBI:30616"/>
    </ligand>
</feature>
<feature type="binding site" evidence="1">
    <location>
        <position position="498"/>
    </location>
    <ligand>
        <name>L-aspartate</name>
        <dbReference type="ChEBI" id="CHEBI:29991"/>
    </ligand>
</feature>
<feature type="binding site" evidence="1">
    <location>
        <begin position="543"/>
        <end position="546"/>
    </location>
    <ligand>
        <name>ATP</name>
        <dbReference type="ChEBI" id="CHEBI:30616"/>
    </ligand>
</feature>
<feature type="site" description="Important for tRNA non-discrimination" evidence="1">
    <location>
        <position position="30"/>
    </location>
</feature>
<feature type="site" description="Important for tRNA non-discrimination" evidence="1">
    <location>
        <position position="81"/>
    </location>
</feature>
<name>SYDND_NEIG2</name>